<protein>
    <recommendedName>
        <fullName evidence="1">Ribosome maturation factor RimP</fullName>
    </recommendedName>
</protein>
<evidence type="ECO:0000255" key="1">
    <source>
        <dbReference type="HAMAP-Rule" id="MF_01077"/>
    </source>
</evidence>
<comment type="function">
    <text evidence="1">Required for maturation of 30S ribosomal subunits.</text>
</comment>
<comment type="subcellular location">
    <subcellularLocation>
        <location evidence="1">Cytoplasm</location>
    </subcellularLocation>
</comment>
<comment type="similarity">
    <text evidence="1">Belongs to the RimP family.</text>
</comment>
<sequence length="151" mass="16684">MTGLERQLTEMLESAVVASGYELVGLEFIRAGEHSTLRIYIDHENGITVEDCAEVSHQVSAVLDVEDPISVAYSLEVSSPGLDRPLFKPAHYEQFIGQEVNVVLKMAVANRRKWKGEIHSVDGEAITLTVDGQQEEFALSNISKANLIPKF</sequence>
<gene>
    <name evidence="1" type="primary">rimP</name>
    <name type="ordered locus">VV2710</name>
</gene>
<keyword id="KW-0963">Cytoplasm</keyword>
<keyword id="KW-0690">Ribosome biogenesis</keyword>
<feature type="chain" id="PRO_0000181952" description="Ribosome maturation factor RimP">
    <location>
        <begin position="1"/>
        <end position="151"/>
    </location>
</feature>
<reference key="1">
    <citation type="journal article" date="2003" name="Genome Res.">
        <title>Comparative genome analysis of Vibrio vulnificus, a marine pathogen.</title>
        <authorList>
            <person name="Chen C.-Y."/>
            <person name="Wu K.-M."/>
            <person name="Chang Y.-C."/>
            <person name="Chang C.-H."/>
            <person name="Tsai H.-C."/>
            <person name="Liao T.-L."/>
            <person name="Liu Y.-M."/>
            <person name="Chen H.-J."/>
            <person name="Shen A.B.-T."/>
            <person name="Li J.-C."/>
            <person name="Su T.-L."/>
            <person name="Shao C.-P."/>
            <person name="Lee C.-T."/>
            <person name="Hor L.-I."/>
            <person name="Tsai S.-F."/>
        </authorList>
    </citation>
    <scope>NUCLEOTIDE SEQUENCE [LARGE SCALE GENOMIC DNA]</scope>
    <source>
        <strain>YJ016</strain>
    </source>
</reference>
<organism>
    <name type="scientific">Vibrio vulnificus (strain YJ016)</name>
    <dbReference type="NCBI Taxonomy" id="196600"/>
    <lineage>
        <taxon>Bacteria</taxon>
        <taxon>Pseudomonadati</taxon>
        <taxon>Pseudomonadota</taxon>
        <taxon>Gammaproteobacteria</taxon>
        <taxon>Vibrionales</taxon>
        <taxon>Vibrionaceae</taxon>
        <taxon>Vibrio</taxon>
    </lineage>
</organism>
<accession>Q7MI07</accession>
<proteinExistence type="inferred from homology"/>
<name>RIMP_VIBVY</name>
<dbReference type="EMBL" id="BA000037">
    <property type="protein sequence ID" value="BAC95474.1"/>
    <property type="molecule type" value="Genomic_DNA"/>
</dbReference>
<dbReference type="RefSeq" id="WP_011079614.1">
    <property type="nucleotide sequence ID" value="NC_005139.1"/>
</dbReference>
<dbReference type="SMR" id="Q7MI07"/>
<dbReference type="STRING" id="672.VV93_v1c24270"/>
<dbReference type="GeneID" id="93895947"/>
<dbReference type="KEGG" id="vvy:VV2710"/>
<dbReference type="eggNOG" id="COG0779">
    <property type="taxonomic scope" value="Bacteria"/>
</dbReference>
<dbReference type="HOGENOM" id="CLU_070525_1_1_6"/>
<dbReference type="Proteomes" id="UP000002675">
    <property type="component" value="Chromosome I"/>
</dbReference>
<dbReference type="GO" id="GO:0005829">
    <property type="term" value="C:cytosol"/>
    <property type="evidence" value="ECO:0007669"/>
    <property type="project" value="TreeGrafter"/>
</dbReference>
<dbReference type="GO" id="GO:0000028">
    <property type="term" value="P:ribosomal small subunit assembly"/>
    <property type="evidence" value="ECO:0007669"/>
    <property type="project" value="TreeGrafter"/>
</dbReference>
<dbReference type="GO" id="GO:0006412">
    <property type="term" value="P:translation"/>
    <property type="evidence" value="ECO:0007669"/>
    <property type="project" value="TreeGrafter"/>
</dbReference>
<dbReference type="CDD" id="cd01734">
    <property type="entry name" value="YlxS_C"/>
    <property type="match status" value="1"/>
</dbReference>
<dbReference type="FunFam" id="2.30.30.180:FF:000001">
    <property type="entry name" value="Ribosome maturation factor RimP"/>
    <property type="match status" value="1"/>
</dbReference>
<dbReference type="FunFam" id="3.30.300.70:FF:000001">
    <property type="entry name" value="Ribosome maturation factor RimP"/>
    <property type="match status" value="1"/>
</dbReference>
<dbReference type="Gene3D" id="2.30.30.180">
    <property type="entry name" value="Ribosome maturation factor RimP, C-terminal domain"/>
    <property type="match status" value="1"/>
</dbReference>
<dbReference type="Gene3D" id="3.30.300.70">
    <property type="entry name" value="RimP-like superfamily, N-terminal"/>
    <property type="match status" value="1"/>
</dbReference>
<dbReference type="HAMAP" id="MF_01077">
    <property type="entry name" value="RimP"/>
    <property type="match status" value="1"/>
</dbReference>
<dbReference type="InterPro" id="IPR003728">
    <property type="entry name" value="Ribosome_maturation_RimP"/>
</dbReference>
<dbReference type="InterPro" id="IPR028998">
    <property type="entry name" value="RimP_C"/>
</dbReference>
<dbReference type="InterPro" id="IPR036847">
    <property type="entry name" value="RimP_C_sf"/>
</dbReference>
<dbReference type="InterPro" id="IPR028989">
    <property type="entry name" value="RimP_N"/>
</dbReference>
<dbReference type="InterPro" id="IPR035956">
    <property type="entry name" value="RimP_N_sf"/>
</dbReference>
<dbReference type="NCBIfam" id="NF000927">
    <property type="entry name" value="PRK00092.1-1"/>
    <property type="match status" value="1"/>
</dbReference>
<dbReference type="PANTHER" id="PTHR33867">
    <property type="entry name" value="RIBOSOME MATURATION FACTOR RIMP"/>
    <property type="match status" value="1"/>
</dbReference>
<dbReference type="PANTHER" id="PTHR33867:SF1">
    <property type="entry name" value="RIBOSOME MATURATION FACTOR RIMP"/>
    <property type="match status" value="1"/>
</dbReference>
<dbReference type="Pfam" id="PF17384">
    <property type="entry name" value="DUF150_C"/>
    <property type="match status" value="1"/>
</dbReference>
<dbReference type="Pfam" id="PF02576">
    <property type="entry name" value="RimP_N"/>
    <property type="match status" value="1"/>
</dbReference>
<dbReference type="SUPFAM" id="SSF74942">
    <property type="entry name" value="YhbC-like, C-terminal domain"/>
    <property type="match status" value="1"/>
</dbReference>
<dbReference type="SUPFAM" id="SSF75420">
    <property type="entry name" value="YhbC-like, N-terminal domain"/>
    <property type="match status" value="1"/>
</dbReference>